<reference key="1">
    <citation type="journal article" date="2005" name="Nucleic Acids Res.">
        <title>Genome dynamics and diversity of Shigella species, the etiologic agents of bacillary dysentery.</title>
        <authorList>
            <person name="Yang F."/>
            <person name="Yang J."/>
            <person name="Zhang X."/>
            <person name="Chen L."/>
            <person name="Jiang Y."/>
            <person name="Yan Y."/>
            <person name="Tang X."/>
            <person name="Wang J."/>
            <person name="Xiong Z."/>
            <person name="Dong J."/>
            <person name="Xue Y."/>
            <person name="Zhu Y."/>
            <person name="Xu X."/>
            <person name="Sun L."/>
            <person name="Chen S."/>
            <person name="Nie H."/>
            <person name="Peng J."/>
            <person name="Xu J."/>
            <person name="Wang Y."/>
            <person name="Yuan Z."/>
            <person name="Wen Y."/>
            <person name="Yao Z."/>
            <person name="Shen Y."/>
            <person name="Qiang B."/>
            <person name="Hou Y."/>
            <person name="Yu J."/>
            <person name="Jin Q."/>
        </authorList>
    </citation>
    <scope>NUCLEOTIDE SEQUENCE [LARGE SCALE GENOMIC DNA]</scope>
    <source>
        <strain>Ss046</strain>
    </source>
</reference>
<evidence type="ECO:0000255" key="1">
    <source>
        <dbReference type="HAMAP-Rule" id="MF_00627"/>
    </source>
</evidence>
<protein>
    <recommendedName>
        <fullName evidence="1">L-threonine 3-dehydrogenase</fullName>
        <shortName evidence="1">TDH</shortName>
        <ecNumber evidence="1">1.1.1.103</ecNumber>
    </recommendedName>
</protein>
<accession>Q3YVY1</accession>
<gene>
    <name evidence="1" type="primary">tdh</name>
    <name type="ordered locus">SSON_3788</name>
</gene>
<name>TDH_SHISS</name>
<feature type="chain" id="PRO_1000051664" description="L-threonine 3-dehydrogenase">
    <location>
        <begin position="1"/>
        <end position="341"/>
    </location>
</feature>
<feature type="active site" description="Charge relay system" evidence="1">
    <location>
        <position position="40"/>
    </location>
</feature>
<feature type="active site" description="Charge relay system" evidence="1">
    <location>
        <position position="43"/>
    </location>
</feature>
<feature type="binding site" evidence="1">
    <location>
        <position position="38"/>
    </location>
    <ligand>
        <name>Zn(2+)</name>
        <dbReference type="ChEBI" id="CHEBI:29105"/>
        <label>1</label>
        <note>catalytic</note>
    </ligand>
</feature>
<feature type="binding site" evidence="1">
    <location>
        <position position="63"/>
    </location>
    <ligand>
        <name>Zn(2+)</name>
        <dbReference type="ChEBI" id="CHEBI:29105"/>
        <label>1</label>
        <note>catalytic</note>
    </ligand>
</feature>
<feature type="binding site" evidence="1">
    <location>
        <position position="64"/>
    </location>
    <ligand>
        <name>Zn(2+)</name>
        <dbReference type="ChEBI" id="CHEBI:29105"/>
        <label>1</label>
        <note>catalytic</note>
    </ligand>
</feature>
<feature type="binding site" evidence="1">
    <location>
        <position position="93"/>
    </location>
    <ligand>
        <name>Zn(2+)</name>
        <dbReference type="ChEBI" id="CHEBI:29105"/>
        <label>2</label>
    </ligand>
</feature>
<feature type="binding site" evidence="1">
    <location>
        <position position="96"/>
    </location>
    <ligand>
        <name>Zn(2+)</name>
        <dbReference type="ChEBI" id="CHEBI:29105"/>
        <label>2</label>
    </ligand>
</feature>
<feature type="binding site" evidence="1">
    <location>
        <position position="99"/>
    </location>
    <ligand>
        <name>Zn(2+)</name>
        <dbReference type="ChEBI" id="CHEBI:29105"/>
        <label>2</label>
    </ligand>
</feature>
<feature type="binding site" evidence="1">
    <location>
        <position position="107"/>
    </location>
    <ligand>
        <name>Zn(2+)</name>
        <dbReference type="ChEBI" id="CHEBI:29105"/>
        <label>2</label>
    </ligand>
</feature>
<feature type="binding site" evidence="1">
    <location>
        <position position="175"/>
    </location>
    <ligand>
        <name>NAD(+)</name>
        <dbReference type="ChEBI" id="CHEBI:57540"/>
    </ligand>
</feature>
<feature type="binding site" evidence="1">
    <location>
        <position position="195"/>
    </location>
    <ligand>
        <name>NAD(+)</name>
        <dbReference type="ChEBI" id="CHEBI:57540"/>
    </ligand>
</feature>
<feature type="binding site" evidence="1">
    <location>
        <position position="200"/>
    </location>
    <ligand>
        <name>NAD(+)</name>
        <dbReference type="ChEBI" id="CHEBI:57540"/>
    </ligand>
</feature>
<feature type="binding site" evidence="1">
    <location>
        <begin position="262"/>
        <end position="264"/>
    </location>
    <ligand>
        <name>NAD(+)</name>
        <dbReference type="ChEBI" id="CHEBI:57540"/>
    </ligand>
</feature>
<feature type="binding site" evidence="1">
    <location>
        <begin position="286"/>
        <end position="287"/>
    </location>
    <ligand>
        <name>NAD(+)</name>
        <dbReference type="ChEBI" id="CHEBI:57540"/>
    </ligand>
</feature>
<feature type="site" description="Important for catalytic activity for the proton relay mechanism but does not participate directly in the coordination of zinc atom" evidence="1">
    <location>
        <position position="148"/>
    </location>
</feature>
<organism>
    <name type="scientific">Shigella sonnei (strain Ss046)</name>
    <dbReference type="NCBI Taxonomy" id="300269"/>
    <lineage>
        <taxon>Bacteria</taxon>
        <taxon>Pseudomonadati</taxon>
        <taxon>Pseudomonadota</taxon>
        <taxon>Gammaproteobacteria</taxon>
        <taxon>Enterobacterales</taxon>
        <taxon>Enterobacteriaceae</taxon>
        <taxon>Shigella</taxon>
    </lineage>
</organism>
<sequence length="341" mass="37239">MKALSKLKAEEGIWMTDVPVPELGHNDLLIKIRKTAICGTDVHIYNWDEWSQKTIPVPMVVGHEYVGEVVGIGQEVKGFKIGDRVSGEGHITCGHCRNCRGGRTHLCRNTIGVGVNRPGCFAEYLVIPAFNAFKIPDNISDDLASIFDPFGNAVHTALSFDLVGEDVLVSGAGPIGIMAAAVAKHVGARNVVITDVNEYRLELARKMGITRAVNVAKENLNDVMAELGMAEGFDIGLEMSGAPPAFRTMLDTMNHGGRIAMLGIPPSDMSIDWTKVIFKGLFIKGIYGREMFETWYKMAALIQSGLDLSPIITHRFSIDDFQKGFDAMRSGQSGKVILSWD</sequence>
<dbReference type="EC" id="1.1.1.103" evidence="1"/>
<dbReference type="EMBL" id="CP000038">
    <property type="protein sequence ID" value="AAZ90331.1"/>
    <property type="molecule type" value="Genomic_DNA"/>
</dbReference>
<dbReference type="RefSeq" id="WP_000646011.1">
    <property type="nucleotide sequence ID" value="NC_007384.1"/>
</dbReference>
<dbReference type="SMR" id="Q3YVY1"/>
<dbReference type="KEGG" id="ssn:SSON_3788"/>
<dbReference type="HOGENOM" id="CLU_026673_11_0_6"/>
<dbReference type="UniPathway" id="UPA00046">
    <property type="reaction ID" value="UER00505"/>
</dbReference>
<dbReference type="Proteomes" id="UP000002529">
    <property type="component" value="Chromosome"/>
</dbReference>
<dbReference type="GO" id="GO:0005737">
    <property type="term" value="C:cytoplasm"/>
    <property type="evidence" value="ECO:0007669"/>
    <property type="project" value="UniProtKB-SubCell"/>
</dbReference>
<dbReference type="GO" id="GO:0008743">
    <property type="term" value="F:L-threonine 3-dehydrogenase activity"/>
    <property type="evidence" value="ECO:0007669"/>
    <property type="project" value="UniProtKB-UniRule"/>
</dbReference>
<dbReference type="GO" id="GO:0008270">
    <property type="term" value="F:zinc ion binding"/>
    <property type="evidence" value="ECO:0007669"/>
    <property type="project" value="UniProtKB-UniRule"/>
</dbReference>
<dbReference type="GO" id="GO:0019518">
    <property type="term" value="P:L-threonine catabolic process to glycine"/>
    <property type="evidence" value="ECO:0007669"/>
    <property type="project" value="UniProtKB-UniPathway"/>
</dbReference>
<dbReference type="FunFam" id="3.40.50.720:FF:000059">
    <property type="entry name" value="L-threonine 3-dehydrogenase"/>
    <property type="match status" value="1"/>
</dbReference>
<dbReference type="Gene3D" id="3.90.180.10">
    <property type="entry name" value="Medium-chain alcohol dehydrogenases, catalytic domain"/>
    <property type="match status" value="1"/>
</dbReference>
<dbReference type="Gene3D" id="3.40.50.720">
    <property type="entry name" value="NAD(P)-binding Rossmann-like Domain"/>
    <property type="match status" value="1"/>
</dbReference>
<dbReference type="HAMAP" id="MF_00627">
    <property type="entry name" value="Thr_dehydrog"/>
    <property type="match status" value="1"/>
</dbReference>
<dbReference type="InterPro" id="IPR013149">
    <property type="entry name" value="ADH-like_C"/>
</dbReference>
<dbReference type="InterPro" id="IPR013154">
    <property type="entry name" value="ADH-like_N"/>
</dbReference>
<dbReference type="InterPro" id="IPR002328">
    <property type="entry name" value="ADH_Zn_CS"/>
</dbReference>
<dbReference type="InterPro" id="IPR011032">
    <property type="entry name" value="GroES-like_sf"/>
</dbReference>
<dbReference type="InterPro" id="IPR004627">
    <property type="entry name" value="L-Threonine_3-DHase"/>
</dbReference>
<dbReference type="InterPro" id="IPR036291">
    <property type="entry name" value="NAD(P)-bd_dom_sf"/>
</dbReference>
<dbReference type="InterPro" id="IPR020843">
    <property type="entry name" value="PKS_ER"/>
</dbReference>
<dbReference type="InterPro" id="IPR050129">
    <property type="entry name" value="Zn_alcohol_dh"/>
</dbReference>
<dbReference type="NCBIfam" id="NF003808">
    <property type="entry name" value="PRK05396.1"/>
    <property type="match status" value="1"/>
</dbReference>
<dbReference type="NCBIfam" id="TIGR00692">
    <property type="entry name" value="tdh"/>
    <property type="match status" value="1"/>
</dbReference>
<dbReference type="PANTHER" id="PTHR43401">
    <property type="entry name" value="L-THREONINE 3-DEHYDROGENASE"/>
    <property type="match status" value="1"/>
</dbReference>
<dbReference type="PANTHER" id="PTHR43401:SF2">
    <property type="entry name" value="L-THREONINE 3-DEHYDROGENASE"/>
    <property type="match status" value="1"/>
</dbReference>
<dbReference type="Pfam" id="PF08240">
    <property type="entry name" value="ADH_N"/>
    <property type="match status" value="1"/>
</dbReference>
<dbReference type="Pfam" id="PF00107">
    <property type="entry name" value="ADH_zinc_N"/>
    <property type="match status" value="1"/>
</dbReference>
<dbReference type="SMART" id="SM00829">
    <property type="entry name" value="PKS_ER"/>
    <property type="match status" value="1"/>
</dbReference>
<dbReference type="SUPFAM" id="SSF50129">
    <property type="entry name" value="GroES-like"/>
    <property type="match status" value="1"/>
</dbReference>
<dbReference type="SUPFAM" id="SSF51735">
    <property type="entry name" value="NAD(P)-binding Rossmann-fold domains"/>
    <property type="match status" value="1"/>
</dbReference>
<dbReference type="PROSITE" id="PS00059">
    <property type="entry name" value="ADH_ZINC"/>
    <property type="match status" value="1"/>
</dbReference>
<proteinExistence type="inferred from homology"/>
<keyword id="KW-0963">Cytoplasm</keyword>
<keyword id="KW-0479">Metal-binding</keyword>
<keyword id="KW-0520">NAD</keyword>
<keyword id="KW-0560">Oxidoreductase</keyword>
<keyword id="KW-1185">Reference proteome</keyword>
<keyword id="KW-0862">Zinc</keyword>
<comment type="function">
    <text evidence="1">Catalyzes the NAD(+)-dependent oxidation of L-threonine to 2-amino-3-ketobutyrate.</text>
</comment>
<comment type="catalytic activity">
    <reaction evidence="1">
        <text>L-threonine + NAD(+) = (2S)-2-amino-3-oxobutanoate + NADH + H(+)</text>
        <dbReference type="Rhea" id="RHEA:13161"/>
        <dbReference type="ChEBI" id="CHEBI:15378"/>
        <dbReference type="ChEBI" id="CHEBI:57540"/>
        <dbReference type="ChEBI" id="CHEBI:57926"/>
        <dbReference type="ChEBI" id="CHEBI:57945"/>
        <dbReference type="ChEBI" id="CHEBI:78948"/>
        <dbReference type="EC" id="1.1.1.103"/>
    </reaction>
</comment>
<comment type="cofactor">
    <cofactor evidence="1">
        <name>Zn(2+)</name>
        <dbReference type="ChEBI" id="CHEBI:29105"/>
    </cofactor>
    <text evidence="1">Binds 2 Zn(2+) ions per subunit.</text>
</comment>
<comment type="pathway">
    <text evidence="1">Amino-acid degradation; L-threonine degradation via oxydo-reductase pathway; glycine from L-threonine: step 1/2.</text>
</comment>
<comment type="subunit">
    <text evidence="1">Homotetramer.</text>
</comment>
<comment type="subcellular location">
    <subcellularLocation>
        <location evidence="1">Cytoplasm</location>
    </subcellularLocation>
</comment>
<comment type="similarity">
    <text evidence="1">Belongs to the zinc-containing alcohol dehydrogenase family.</text>
</comment>